<proteinExistence type="inferred from homology"/>
<name>RL19_PROMA</name>
<sequence>MTEDLKNTSPSKEESNEIEESSKATPKATRETKPKDSPSKTKLSAQALIAQFEKSQQKKKVPEVYVGDTVRVGVRISEGNKERVQPYEGVIIAKRHGGLNQTITVRRIFQGVGVERVFMVHSPQVASIKVERRGKVRRAKLFYLRDRVGKATRVKQRFDR</sequence>
<comment type="function">
    <text evidence="1">This protein is located at the 30S-50S ribosomal subunit interface and may play a role in the structure and function of the aminoacyl-tRNA binding site.</text>
</comment>
<comment type="similarity">
    <text evidence="1">Belongs to the bacterial ribosomal protein bL19 family.</text>
</comment>
<keyword id="KW-1185">Reference proteome</keyword>
<keyword id="KW-0687">Ribonucleoprotein</keyword>
<keyword id="KW-0689">Ribosomal protein</keyword>
<gene>
    <name evidence="1" type="primary">rplS</name>
    <name evidence="1" type="synonym">rpl19</name>
    <name type="ordered locus">Pro_0473</name>
</gene>
<dbReference type="EMBL" id="AE017126">
    <property type="protein sequence ID" value="AAP99518.1"/>
    <property type="molecule type" value="Genomic_DNA"/>
</dbReference>
<dbReference type="RefSeq" id="NP_874866.1">
    <property type="nucleotide sequence ID" value="NC_005042.1"/>
</dbReference>
<dbReference type="RefSeq" id="WP_011124627.1">
    <property type="nucleotide sequence ID" value="NC_005042.1"/>
</dbReference>
<dbReference type="SMR" id="Q7VDB0"/>
<dbReference type="STRING" id="167539.Pro_0473"/>
<dbReference type="EnsemblBacteria" id="AAP99518">
    <property type="protein sequence ID" value="AAP99518"/>
    <property type="gene ID" value="Pro_0473"/>
</dbReference>
<dbReference type="KEGG" id="pma:Pro_0473"/>
<dbReference type="PATRIC" id="fig|167539.5.peg.486"/>
<dbReference type="eggNOG" id="COG0335">
    <property type="taxonomic scope" value="Bacteria"/>
</dbReference>
<dbReference type="HOGENOM" id="CLU_103507_2_0_3"/>
<dbReference type="OrthoDB" id="9803541at2"/>
<dbReference type="Proteomes" id="UP000001420">
    <property type="component" value="Chromosome"/>
</dbReference>
<dbReference type="GO" id="GO:0022625">
    <property type="term" value="C:cytosolic large ribosomal subunit"/>
    <property type="evidence" value="ECO:0007669"/>
    <property type="project" value="TreeGrafter"/>
</dbReference>
<dbReference type="GO" id="GO:0003735">
    <property type="term" value="F:structural constituent of ribosome"/>
    <property type="evidence" value="ECO:0007669"/>
    <property type="project" value="InterPro"/>
</dbReference>
<dbReference type="GO" id="GO:0006412">
    <property type="term" value="P:translation"/>
    <property type="evidence" value="ECO:0007669"/>
    <property type="project" value="UniProtKB-UniRule"/>
</dbReference>
<dbReference type="FunFam" id="2.30.30.790:FF:000001">
    <property type="entry name" value="50S ribosomal protein L19"/>
    <property type="match status" value="1"/>
</dbReference>
<dbReference type="Gene3D" id="2.30.30.790">
    <property type="match status" value="1"/>
</dbReference>
<dbReference type="HAMAP" id="MF_00402">
    <property type="entry name" value="Ribosomal_bL19"/>
    <property type="match status" value="1"/>
</dbReference>
<dbReference type="InterPro" id="IPR001857">
    <property type="entry name" value="Ribosomal_bL19"/>
</dbReference>
<dbReference type="InterPro" id="IPR018257">
    <property type="entry name" value="Ribosomal_bL19_CS"/>
</dbReference>
<dbReference type="InterPro" id="IPR038657">
    <property type="entry name" value="Ribosomal_bL19_sf"/>
</dbReference>
<dbReference type="InterPro" id="IPR008991">
    <property type="entry name" value="Translation_prot_SH3-like_sf"/>
</dbReference>
<dbReference type="NCBIfam" id="TIGR01024">
    <property type="entry name" value="rplS_bact"/>
    <property type="match status" value="1"/>
</dbReference>
<dbReference type="PANTHER" id="PTHR15680:SF9">
    <property type="entry name" value="LARGE RIBOSOMAL SUBUNIT PROTEIN BL19M"/>
    <property type="match status" value="1"/>
</dbReference>
<dbReference type="PANTHER" id="PTHR15680">
    <property type="entry name" value="RIBOSOMAL PROTEIN L19"/>
    <property type="match status" value="1"/>
</dbReference>
<dbReference type="Pfam" id="PF01245">
    <property type="entry name" value="Ribosomal_L19"/>
    <property type="match status" value="1"/>
</dbReference>
<dbReference type="PRINTS" id="PR00061">
    <property type="entry name" value="RIBOSOMALL19"/>
</dbReference>
<dbReference type="SUPFAM" id="SSF50104">
    <property type="entry name" value="Translation proteins SH3-like domain"/>
    <property type="match status" value="1"/>
</dbReference>
<dbReference type="PROSITE" id="PS01015">
    <property type="entry name" value="RIBOSOMAL_L19"/>
    <property type="match status" value="1"/>
</dbReference>
<protein>
    <recommendedName>
        <fullName evidence="1">Large ribosomal subunit protein bL19</fullName>
    </recommendedName>
    <alternativeName>
        <fullName evidence="3">50S ribosomal protein L19</fullName>
    </alternativeName>
</protein>
<accession>Q7VDB0</accession>
<organism>
    <name type="scientific">Prochlorococcus marinus (strain SARG / CCMP1375 / SS120)</name>
    <dbReference type="NCBI Taxonomy" id="167539"/>
    <lineage>
        <taxon>Bacteria</taxon>
        <taxon>Bacillati</taxon>
        <taxon>Cyanobacteriota</taxon>
        <taxon>Cyanophyceae</taxon>
        <taxon>Synechococcales</taxon>
        <taxon>Prochlorococcaceae</taxon>
        <taxon>Prochlorococcus</taxon>
    </lineage>
</organism>
<evidence type="ECO:0000255" key="1">
    <source>
        <dbReference type="HAMAP-Rule" id="MF_00402"/>
    </source>
</evidence>
<evidence type="ECO:0000256" key="2">
    <source>
        <dbReference type="SAM" id="MobiDB-lite"/>
    </source>
</evidence>
<evidence type="ECO:0000305" key="3"/>
<feature type="chain" id="PRO_0000163507" description="Large ribosomal subunit protein bL19">
    <location>
        <begin position="1"/>
        <end position="160"/>
    </location>
</feature>
<feature type="region of interest" description="Disordered" evidence="2">
    <location>
        <begin position="1"/>
        <end position="44"/>
    </location>
</feature>
<feature type="compositionally biased region" description="Basic and acidic residues" evidence="2">
    <location>
        <begin position="1"/>
        <end position="15"/>
    </location>
</feature>
<feature type="compositionally biased region" description="Basic and acidic residues" evidence="2">
    <location>
        <begin position="28"/>
        <end position="39"/>
    </location>
</feature>
<reference key="1">
    <citation type="journal article" date="2003" name="Proc. Natl. Acad. Sci. U.S.A.">
        <title>Genome sequence of the cyanobacterium Prochlorococcus marinus SS120, a nearly minimal oxyphototrophic genome.</title>
        <authorList>
            <person name="Dufresne A."/>
            <person name="Salanoubat M."/>
            <person name="Partensky F."/>
            <person name="Artiguenave F."/>
            <person name="Axmann I.M."/>
            <person name="Barbe V."/>
            <person name="Duprat S."/>
            <person name="Galperin M.Y."/>
            <person name="Koonin E.V."/>
            <person name="Le Gall F."/>
            <person name="Makarova K.S."/>
            <person name="Ostrowski M."/>
            <person name="Oztas S."/>
            <person name="Robert C."/>
            <person name="Rogozin I.B."/>
            <person name="Scanlan D.J."/>
            <person name="Tandeau de Marsac N."/>
            <person name="Weissenbach J."/>
            <person name="Wincker P."/>
            <person name="Wolf Y.I."/>
            <person name="Hess W.R."/>
        </authorList>
    </citation>
    <scope>NUCLEOTIDE SEQUENCE [LARGE SCALE GENOMIC DNA]</scope>
    <source>
        <strain>SARG / CCMP1375 / SS120</strain>
    </source>
</reference>